<name>KHSE_YERE8</name>
<feature type="chain" id="PRO_1000049196" description="Homoserine kinase">
    <location>
        <begin position="1"/>
        <end position="309"/>
    </location>
</feature>
<feature type="binding site" evidence="1">
    <location>
        <begin position="91"/>
        <end position="101"/>
    </location>
    <ligand>
        <name>ATP</name>
        <dbReference type="ChEBI" id="CHEBI:30616"/>
    </ligand>
</feature>
<reference key="1">
    <citation type="journal article" date="2006" name="PLoS Genet.">
        <title>The complete genome sequence and comparative genome analysis of the high pathogenicity Yersinia enterocolitica strain 8081.</title>
        <authorList>
            <person name="Thomson N.R."/>
            <person name="Howard S."/>
            <person name="Wren B.W."/>
            <person name="Holden M.T.G."/>
            <person name="Crossman L."/>
            <person name="Challis G.L."/>
            <person name="Churcher C."/>
            <person name="Mungall K."/>
            <person name="Brooks K."/>
            <person name="Chillingworth T."/>
            <person name="Feltwell T."/>
            <person name="Abdellah Z."/>
            <person name="Hauser H."/>
            <person name="Jagels K."/>
            <person name="Maddison M."/>
            <person name="Moule S."/>
            <person name="Sanders M."/>
            <person name="Whitehead S."/>
            <person name="Quail M.A."/>
            <person name="Dougan G."/>
            <person name="Parkhill J."/>
            <person name="Prentice M.B."/>
        </authorList>
    </citation>
    <scope>NUCLEOTIDE SEQUENCE [LARGE SCALE GENOMIC DNA]</scope>
    <source>
        <strain>NCTC 13174 / 8081</strain>
    </source>
</reference>
<sequence>MVKIYAPASIGNVSVGFDVLGAAVSPVDGTLLGDCVSVTASDSFSLRNEGRFVSKLPDDPKENIVYQCWERFCQEMGKEIPVALVLEKNMPIGSGLGSSACSVVAGLMAMNEFCGKPLDKVTLLGMMGELEGRVSGSVHFDNVAPCYLGGMQLILEQPGYISQDVPGFDDWLWVMAYPGIKVSTAEARAILPAQYRRQDCIAHGRNLAGFIHACHTQQPSLAAKMMKDVIAEPYRTQLLPGFAAARQAAQDIGALACGISGSGPTLFAVCNDSETAQRMASWLQNHYLQNDEGFVHICRLDTAGARLLG</sequence>
<organism>
    <name type="scientific">Yersinia enterocolitica serotype O:8 / biotype 1B (strain NCTC 13174 / 8081)</name>
    <dbReference type="NCBI Taxonomy" id="393305"/>
    <lineage>
        <taxon>Bacteria</taxon>
        <taxon>Pseudomonadati</taxon>
        <taxon>Pseudomonadota</taxon>
        <taxon>Gammaproteobacteria</taxon>
        <taxon>Enterobacterales</taxon>
        <taxon>Yersiniaceae</taxon>
        <taxon>Yersinia</taxon>
    </lineage>
</organism>
<gene>
    <name evidence="1" type="primary">thrB</name>
    <name type="ordered locus">YE0601</name>
</gene>
<protein>
    <recommendedName>
        <fullName evidence="1">Homoserine kinase</fullName>
        <shortName evidence="1">HK</shortName>
        <shortName evidence="1">HSK</shortName>
        <ecNumber evidence="1">2.7.1.39</ecNumber>
    </recommendedName>
</protein>
<comment type="function">
    <text evidence="1">Catalyzes the ATP-dependent phosphorylation of L-homoserine to L-homoserine phosphate.</text>
</comment>
<comment type="catalytic activity">
    <reaction evidence="1">
        <text>L-homoserine + ATP = O-phospho-L-homoserine + ADP + H(+)</text>
        <dbReference type="Rhea" id="RHEA:13985"/>
        <dbReference type="ChEBI" id="CHEBI:15378"/>
        <dbReference type="ChEBI" id="CHEBI:30616"/>
        <dbReference type="ChEBI" id="CHEBI:57476"/>
        <dbReference type="ChEBI" id="CHEBI:57590"/>
        <dbReference type="ChEBI" id="CHEBI:456216"/>
        <dbReference type="EC" id="2.7.1.39"/>
    </reaction>
</comment>
<comment type="pathway">
    <text evidence="1">Amino-acid biosynthesis; L-threonine biosynthesis; L-threonine from L-aspartate: step 4/5.</text>
</comment>
<comment type="subcellular location">
    <subcellularLocation>
        <location evidence="1">Cytoplasm</location>
    </subcellularLocation>
</comment>
<comment type="similarity">
    <text evidence="1">Belongs to the GHMP kinase family. Homoserine kinase subfamily.</text>
</comment>
<accession>A1JJC7</accession>
<keyword id="KW-0028">Amino-acid biosynthesis</keyword>
<keyword id="KW-0067">ATP-binding</keyword>
<keyword id="KW-0963">Cytoplasm</keyword>
<keyword id="KW-0418">Kinase</keyword>
<keyword id="KW-0547">Nucleotide-binding</keyword>
<keyword id="KW-0791">Threonine biosynthesis</keyword>
<keyword id="KW-0808">Transferase</keyword>
<evidence type="ECO:0000255" key="1">
    <source>
        <dbReference type="HAMAP-Rule" id="MF_00384"/>
    </source>
</evidence>
<dbReference type="EC" id="2.7.1.39" evidence="1"/>
<dbReference type="EMBL" id="AM286415">
    <property type="protein sequence ID" value="CAL10715.1"/>
    <property type="molecule type" value="Genomic_DNA"/>
</dbReference>
<dbReference type="RefSeq" id="WP_005166953.1">
    <property type="nucleotide sequence ID" value="NC_008800.1"/>
</dbReference>
<dbReference type="RefSeq" id="YP_001004955.1">
    <property type="nucleotide sequence ID" value="NC_008800.1"/>
</dbReference>
<dbReference type="SMR" id="A1JJC7"/>
<dbReference type="KEGG" id="yen:YE0601"/>
<dbReference type="PATRIC" id="fig|393305.7.peg.695"/>
<dbReference type="eggNOG" id="COG0083">
    <property type="taxonomic scope" value="Bacteria"/>
</dbReference>
<dbReference type="HOGENOM" id="CLU_041243_1_1_6"/>
<dbReference type="OrthoDB" id="9769912at2"/>
<dbReference type="UniPathway" id="UPA00050">
    <property type="reaction ID" value="UER00064"/>
</dbReference>
<dbReference type="Proteomes" id="UP000000642">
    <property type="component" value="Chromosome"/>
</dbReference>
<dbReference type="GO" id="GO:0005737">
    <property type="term" value="C:cytoplasm"/>
    <property type="evidence" value="ECO:0007669"/>
    <property type="project" value="UniProtKB-SubCell"/>
</dbReference>
<dbReference type="GO" id="GO:0005524">
    <property type="term" value="F:ATP binding"/>
    <property type="evidence" value="ECO:0007669"/>
    <property type="project" value="UniProtKB-UniRule"/>
</dbReference>
<dbReference type="GO" id="GO:0004413">
    <property type="term" value="F:homoserine kinase activity"/>
    <property type="evidence" value="ECO:0007669"/>
    <property type="project" value="UniProtKB-UniRule"/>
</dbReference>
<dbReference type="GO" id="GO:0009088">
    <property type="term" value="P:threonine biosynthetic process"/>
    <property type="evidence" value="ECO:0007669"/>
    <property type="project" value="UniProtKB-UniRule"/>
</dbReference>
<dbReference type="FunFam" id="3.30.230.10:FF:000020">
    <property type="entry name" value="Homoserine kinase"/>
    <property type="match status" value="1"/>
</dbReference>
<dbReference type="FunFam" id="3.30.70.890:FF:000002">
    <property type="entry name" value="Homoserine kinase"/>
    <property type="match status" value="1"/>
</dbReference>
<dbReference type="Gene3D" id="3.30.230.10">
    <property type="match status" value="1"/>
</dbReference>
<dbReference type="Gene3D" id="3.30.70.890">
    <property type="entry name" value="GHMP kinase, C-terminal domain"/>
    <property type="match status" value="1"/>
</dbReference>
<dbReference type="HAMAP" id="MF_00384">
    <property type="entry name" value="Homoser_kinase"/>
    <property type="match status" value="1"/>
</dbReference>
<dbReference type="InterPro" id="IPR013750">
    <property type="entry name" value="GHMP_kinase_C_dom"/>
</dbReference>
<dbReference type="InterPro" id="IPR036554">
    <property type="entry name" value="GHMP_kinase_C_sf"/>
</dbReference>
<dbReference type="InterPro" id="IPR006204">
    <property type="entry name" value="GHMP_kinase_N_dom"/>
</dbReference>
<dbReference type="InterPro" id="IPR006203">
    <property type="entry name" value="GHMP_knse_ATP-bd_CS"/>
</dbReference>
<dbReference type="InterPro" id="IPR000870">
    <property type="entry name" value="Homoserine_kinase"/>
</dbReference>
<dbReference type="InterPro" id="IPR020568">
    <property type="entry name" value="Ribosomal_Su5_D2-typ_SF"/>
</dbReference>
<dbReference type="InterPro" id="IPR014721">
    <property type="entry name" value="Ribsml_uS5_D2-typ_fold_subgr"/>
</dbReference>
<dbReference type="NCBIfam" id="NF002288">
    <property type="entry name" value="PRK01212.1-4"/>
    <property type="match status" value="1"/>
</dbReference>
<dbReference type="NCBIfam" id="TIGR00191">
    <property type="entry name" value="thrB"/>
    <property type="match status" value="1"/>
</dbReference>
<dbReference type="PANTHER" id="PTHR20861:SF1">
    <property type="entry name" value="HOMOSERINE KINASE"/>
    <property type="match status" value="1"/>
</dbReference>
<dbReference type="PANTHER" id="PTHR20861">
    <property type="entry name" value="HOMOSERINE/4-DIPHOSPHOCYTIDYL-2-C-METHYL-D-ERYTHRITOL KINASE"/>
    <property type="match status" value="1"/>
</dbReference>
<dbReference type="Pfam" id="PF08544">
    <property type="entry name" value="GHMP_kinases_C"/>
    <property type="match status" value="1"/>
</dbReference>
<dbReference type="Pfam" id="PF00288">
    <property type="entry name" value="GHMP_kinases_N"/>
    <property type="match status" value="1"/>
</dbReference>
<dbReference type="PIRSF" id="PIRSF000676">
    <property type="entry name" value="Homoser_kin"/>
    <property type="match status" value="1"/>
</dbReference>
<dbReference type="PRINTS" id="PR00958">
    <property type="entry name" value="HOMSERKINASE"/>
</dbReference>
<dbReference type="SUPFAM" id="SSF55060">
    <property type="entry name" value="GHMP Kinase, C-terminal domain"/>
    <property type="match status" value="1"/>
</dbReference>
<dbReference type="SUPFAM" id="SSF54211">
    <property type="entry name" value="Ribosomal protein S5 domain 2-like"/>
    <property type="match status" value="1"/>
</dbReference>
<dbReference type="PROSITE" id="PS00627">
    <property type="entry name" value="GHMP_KINASES_ATP"/>
    <property type="match status" value="1"/>
</dbReference>
<proteinExistence type="inferred from homology"/>